<evidence type="ECO:0000250" key="1"/>
<evidence type="ECO:0000255" key="2">
    <source>
        <dbReference type="HAMAP-Rule" id="MF_00614"/>
    </source>
</evidence>
<evidence type="ECO:0000305" key="3"/>
<keyword id="KW-0227">DNA damage</keyword>
<keyword id="KW-0234">DNA repair</keyword>
<keyword id="KW-0235">DNA replication</keyword>
<keyword id="KW-0255">Endonuclease</keyword>
<keyword id="KW-0269">Exonuclease</keyword>
<keyword id="KW-0378">Hydrolase</keyword>
<keyword id="KW-0460">Magnesium</keyword>
<keyword id="KW-0479">Metal-binding</keyword>
<keyword id="KW-0540">Nuclease</keyword>
<keyword id="KW-1185">Reference proteome</keyword>
<reference key="1">
    <citation type="journal article" date="2005" name="J. Bacteriol.">
        <title>The genome of Sulfolobus acidocaldarius, a model organism of the Crenarchaeota.</title>
        <authorList>
            <person name="Chen L."/>
            <person name="Bruegger K."/>
            <person name="Skovgaard M."/>
            <person name="Redder P."/>
            <person name="She Q."/>
            <person name="Torarinsson E."/>
            <person name="Greve B."/>
            <person name="Awayez M."/>
            <person name="Zibat A."/>
            <person name="Klenk H.-P."/>
            <person name="Garrett R.A."/>
        </authorList>
    </citation>
    <scope>NUCLEOTIDE SEQUENCE [LARGE SCALE GENOMIC DNA]</scope>
    <source>
        <strain>ATCC 33909 / DSM 639 / JCM 8929 / NBRC 15157 / NCIMB 11770</strain>
    </source>
</reference>
<sequence>MDLGEIVEDVKREINLNEMKGKKISIDAYNTIYQFLAAIRQPDGTPLIDSKGRITSHLNGLFYRTISIIESGIIPIFVFDGKPPEKKSEEIERRKRAKEEAEKKLEKAKLEGEYREIRKYAQAAVRLSNEMVEESKKLLDAMGIPVVQAPGEGEAEAAYINSIDLSWAAASQDYDSLLFGAKRLVRNITISGKRKLPNKDVYVEIKPELIELESLLKKLGINREQLIDIAILIGTDYNPDGVKGIGVKTALRIIKKYNNIENAIEKGEIQLSKINFDIREIRKLFITPEVKKPTERLELAECNEREIIELLVKNHDFNEDRVNNGIERLKKAIKEAKSVEKQTGLDQWF</sequence>
<comment type="function">
    <text evidence="1">Structure-specific nuclease with 5'-flap endonuclease and 5'-3' exonuclease activities involved in DNA replication and repair. During DNA replication, cleaves the 5'-overhanging flap structure that is generated by displacement synthesis when DNA polymerase encounters the 5'-end of a downstream Okazaki fragment. Binds the unpaired 3'-DNA end and kinks the DNA to facilitate 5' cleavage specificity. Cleaves one nucleotide into the double-stranded DNA from the junction in flap DNA, leaving a nick for ligation. Also involved in the base excision repair (BER) pathway. Acts as a genome stabilization factor that prevents flaps from equilibrating into structures that lead to duplications and deletions. Also possesses 5'-3' exonuclease activity on nicked or gapped double-stranded DNA (By similarity).</text>
</comment>
<comment type="cofactor">
    <cofactor evidence="2">
        <name>Mg(2+)</name>
        <dbReference type="ChEBI" id="CHEBI:18420"/>
    </cofactor>
    <text evidence="2">Binds 2 magnesium ions per subunit. They probably participate in the reaction catalyzed by the enzyme. May bind an additional third magnesium ion after substrate binding.</text>
</comment>
<comment type="subunit">
    <text evidence="2">Interacts with PCNA. PCNA stimulates the nuclease activity without altering cleavage specificity.</text>
</comment>
<comment type="similarity">
    <text evidence="2">Belongs to the XPG/RAD2 endonuclease family. FEN1 subfamily.</text>
</comment>
<comment type="sequence caution" evidence="3">
    <conflict type="erroneous initiation">
        <sequence resource="EMBL-CDS" id="AAY80148"/>
    </conflict>
</comment>
<proteinExistence type="inferred from homology"/>
<gene>
    <name evidence="2" type="primary">fen</name>
    <name type="ordered locus">Saci_0775</name>
</gene>
<protein>
    <recommendedName>
        <fullName evidence="2">Flap endonuclease 1</fullName>
        <shortName evidence="2">FEN-1</shortName>
        <ecNumber evidence="2">3.1.-.-</ecNumber>
    </recommendedName>
    <alternativeName>
        <fullName evidence="2">Flap structure-specific endonuclease 1</fullName>
    </alternativeName>
</protein>
<accession>Q4JAN1</accession>
<dbReference type="EC" id="3.1.-.-" evidence="2"/>
<dbReference type="EMBL" id="CP000077">
    <property type="protein sequence ID" value="AAY80148.1"/>
    <property type="status" value="ALT_INIT"/>
    <property type="molecule type" value="Genomic_DNA"/>
</dbReference>
<dbReference type="SMR" id="Q4JAN1"/>
<dbReference type="STRING" id="330779.Saci_0775"/>
<dbReference type="KEGG" id="sai:Saci_0775"/>
<dbReference type="PATRIC" id="fig|330779.12.peg.741"/>
<dbReference type="eggNOG" id="arCOG04050">
    <property type="taxonomic scope" value="Archaea"/>
</dbReference>
<dbReference type="HOGENOM" id="CLU_032444_0_0_2"/>
<dbReference type="Proteomes" id="UP000001018">
    <property type="component" value="Chromosome"/>
</dbReference>
<dbReference type="GO" id="GO:0008409">
    <property type="term" value="F:5'-3' exonuclease activity"/>
    <property type="evidence" value="ECO:0007669"/>
    <property type="project" value="UniProtKB-UniRule"/>
</dbReference>
<dbReference type="GO" id="GO:0017108">
    <property type="term" value="F:5'-flap endonuclease activity"/>
    <property type="evidence" value="ECO:0007669"/>
    <property type="project" value="UniProtKB-UniRule"/>
</dbReference>
<dbReference type="GO" id="GO:0003677">
    <property type="term" value="F:DNA binding"/>
    <property type="evidence" value="ECO:0007669"/>
    <property type="project" value="UniProtKB-UniRule"/>
</dbReference>
<dbReference type="GO" id="GO:0000287">
    <property type="term" value="F:magnesium ion binding"/>
    <property type="evidence" value="ECO:0007669"/>
    <property type="project" value="UniProtKB-UniRule"/>
</dbReference>
<dbReference type="GO" id="GO:0006281">
    <property type="term" value="P:DNA repair"/>
    <property type="evidence" value="ECO:0007669"/>
    <property type="project" value="UniProtKB-UniRule"/>
</dbReference>
<dbReference type="GO" id="GO:0043137">
    <property type="term" value="P:DNA replication, removal of RNA primer"/>
    <property type="evidence" value="ECO:0007669"/>
    <property type="project" value="UniProtKB-UniRule"/>
</dbReference>
<dbReference type="CDD" id="cd09903">
    <property type="entry name" value="H3TH_FEN1-Arc"/>
    <property type="match status" value="1"/>
</dbReference>
<dbReference type="CDD" id="cd09867">
    <property type="entry name" value="PIN_FEN1"/>
    <property type="match status" value="1"/>
</dbReference>
<dbReference type="FunFam" id="1.10.150.20:FF:000087">
    <property type="entry name" value="Flap endonuclease 1"/>
    <property type="match status" value="1"/>
</dbReference>
<dbReference type="FunFam" id="3.40.50.1010:FF:000016">
    <property type="entry name" value="Flap endonuclease 1"/>
    <property type="match status" value="1"/>
</dbReference>
<dbReference type="Gene3D" id="1.10.150.20">
    <property type="entry name" value="5' to 3' exonuclease, C-terminal subdomain"/>
    <property type="match status" value="1"/>
</dbReference>
<dbReference type="Gene3D" id="3.40.50.1010">
    <property type="entry name" value="5'-nuclease"/>
    <property type="match status" value="1"/>
</dbReference>
<dbReference type="HAMAP" id="MF_00614">
    <property type="entry name" value="Fen"/>
    <property type="match status" value="1"/>
</dbReference>
<dbReference type="InterPro" id="IPR002421">
    <property type="entry name" value="5-3_exonuclease"/>
</dbReference>
<dbReference type="InterPro" id="IPR036279">
    <property type="entry name" value="5-3_exonuclease_C_sf"/>
</dbReference>
<dbReference type="InterPro" id="IPR023426">
    <property type="entry name" value="Flap_endonuc"/>
</dbReference>
<dbReference type="InterPro" id="IPR019973">
    <property type="entry name" value="Flap_endonuc_arc"/>
</dbReference>
<dbReference type="InterPro" id="IPR008918">
    <property type="entry name" value="HhH2"/>
</dbReference>
<dbReference type="InterPro" id="IPR029060">
    <property type="entry name" value="PIN-like_dom_sf"/>
</dbReference>
<dbReference type="InterPro" id="IPR006086">
    <property type="entry name" value="XPG-I_dom"/>
</dbReference>
<dbReference type="InterPro" id="IPR006084">
    <property type="entry name" value="XPG/Rad2"/>
</dbReference>
<dbReference type="InterPro" id="IPR019974">
    <property type="entry name" value="XPG_CS"/>
</dbReference>
<dbReference type="InterPro" id="IPR006085">
    <property type="entry name" value="XPG_DNA_repair_N"/>
</dbReference>
<dbReference type="NCBIfam" id="TIGR03674">
    <property type="entry name" value="fen_arch"/>
    <property type="match status" value="1"/>
</dbReference>
<dbReference type="PANTHER" id="PTHR11081:SF9">
    <property type="entry name" value="FLAP ENDONUCLEASE 1"/>
    <property type="match status" value="1"/>
</dbReference>
<dbReference type="PANTHER" id="PTHR11081">
    <property type="entry name" value="FLAP ENDONUCLEASE FAMILY MEMBER"/>
    <property type="match status" value="1"/>
</dbReference>
<dbReference type="Pfam" id="PF00867">
    <property type="entry name" value="XPG_I"/>
    <property type="match status" value="1"/>
</dbReference>
<dbReference type="Pfam" id="PF00752">
    <property type="entry name" value="XPG_N"/>
    <property type="match status" value="1"/>
</dbReference>
<dbReference type="PRINTS" id="PR00853">
    <property type="entry name" value="XPGRADSUPER"/>
</dbReference>
<dbReference type="SMART" id="SM00475">
    <property type="entry name" value="53EXOc"/>
    <property type="match status" value="1"/>
</dbReference>
<dbReference type="SMART" id="SM00279">
    <property type="entry name" value="HhH2"/>
    <property type="match status" value="1"/>
</dbReference>
<dbReference type="SMART" id="SM00484">
    <property type="entry name" value="XPGI"/>
    <property type="match status" value="1"/>
</dbReference>
<dbReference type="SMART" id="SM00485">
    <property type="entry name" value="XPGN"/>
    <property type="match status" value="1"/>
</dbReference>
<dbReference type="SUPFAM" id="SSF47807">
    <property type="entry name" value="5' to 3' exonuclease, C-terminal subdomain"/>
    <property type="match status" value="1"/>
</dbReference>
<dbReference type="SUPFAM" id="SSF88723">
    <property type="entry name" value="PIN domain-like"/>
    <property type="match status" value="1"/>
</dbReference>
<dbReference type="PROSITE" id="PS00841">
    <property type="entry name" value="XPG_1"/>
    <property type="match status" value="1"/>
</dbReference>
<organism>
    <name type="scientific">Sulfolobus acidocaldarius (strain ATCC 33909 / DSM 639 / JCM 8929 / NBRC 15157 / NCIMB 11770)</name>
    <dbReference type="NCBI Taxonomy" id="330779"/>
    <lineage>
        <taxon>Archaea</taxon>
        <taxon>Thermoproteota</taxon>
        <taxon>Thermoprotei</taxon>
        <taxon>Sulfolobales</taxon>
        <taxon>Sulfolobaceae</taxon>
        <taxon>Sulfolobus</taxon>
    </lineage>
</organism>
<name>FEN_SULAC</name>
<feature type="chain" id="PRO_0000154064" description="Flap endonuclease 1">
    <location>
        <begin position="1"/>
        <end position="349"/>
    </location>
</feature>
<feature type="region of interest" description="N-domain">
    <location>
        <begin position="1"/>
        <end position="98"/>
    </location>
</feature>
<feature type="region of interest" description="I-domain">
    <location>
        <begin position="116"/>
        <end position="258"/>
    </location>
</feature>
<feature type="region of interest" description="Interaction with PCNA" evidence="2">
    <location>
        <begin position="341"/>
        <end position="349"/>
    </location>
</feature>
<feature type="binding site" evidence="2">
    <location>
        <position position="27"/>
    </location>
    <ligand>
        <name>Mg(2+)</name>
        <dbReference type="ChEBI" id="CHEBI:18420"/>
        <label>1</label>
    </ligand>
</feature>
<feature type="binding site" evidence="2">
    <location>
        <position position="80"/>
    </location>
    <ligand>
        <name>Mg(2+)</name>
        <dbReference type="ChEBI" id="CHEBI:18420"/>
        <label>1</label>
    </ligand>
</feature>
<feature type="binding site" evidence="2">
    <location>
        <position position="152"/>
    </location>
    <ligand>
        <name>Mg(2+)</name>
        <dbReference type="ChEBI" id="CHEBI:18420"/>
        <label>1</label>
    </ligand>
</feature>
<feature type="binding site" evidence="2">
    <location>
        <position position="154"/>
    </location>
    <ligand>
        <name>Mg(2+)</name>
        <dbReference type="ChEBI" id="CHEBI:18420"/>
        <label>1</label>
    </ligand>
</feature>
<feature type="binding site" evidence="2">
    <location>
        <position position="173"/>
    </location>
    <ligand>
        <name>Mg(2+)</name>
        <dbReference type="ChEBI" id="CHEBI:18420"/>
        <label>2</label>
    </ligand>
</feature>
<feature type="binding site" evidence="2">
    <location>
        <position position="175"/>
    </location>
    <ligand>
        <name>Mg(2+)</name>
        <dbReference type="ChEBI" id="CHEBI:18420"/>
        <label>2</label>
    </ligand>
</feature>
<feature type="binding site" evidence="2">
    <location>
        <position position="236"/>
    </location>
    <ligand>
        <name>Mg(2+)</name>
        <dbReference type="ChEBI" id="CHEBI:18420"/>
        <label>2</label>
    </ligand>
</feature>